<reference key="1">
    <citation type="journal article" date="1995" name="Infect. Immun.">
        <title>Avirulence of rough mutants of Shigella flexneri: requirement of O antigen for correct unipolar localization of IcsA in the bacterial outer membrane.</title>
        <authorList>
            <person name="Sandlin R.C."/>
            <person name="Lampel K.A."/>
            <person name="Keasler S.P."/>
            <person name="Goldberg M.B."/>
            <person name="Stolzer A.L."/>
            <person name="Maurelli A.T."/>
        </authorList>
    </citation>
    <scope>NUCLEOTIDE SEQUENCE [GENOMIC DNA]</scope>
    <scope>CHARACTERIZATION OF ROLE IN LPS SYNTHESIS AND VIRULENCE</scope>
    <scope>DISRUPTION PHENOTYPE</scope>
    <source>
        <strain>ATCC 700930 / 2457T / Serotype 2a</strain>
    </source>
</reference>
<reference key="2">
    <citation type="journal article" date="2002" name="Nucleic Acids Res.">
        <title>Genome sequence of Shigella flexneri 2a: insights into pathogenicity through comparison with genomes of Escherichia coli K12 and O157.</title>
        <authorList>
            <person name="Jin Q."/>
            <person name="Yuan Z."/>
            <person name="Xu J."/>
            <person name="Wang Y."/>
            <person name="Shen Y."/>
            <person name="Lu W."/>
            <person name="Wang J."/>
            <person name="Liu H."/>
            <person name="Yang J."/>
            <person name="Yang F."/>
            <person name="Zhang X."/>
            <person name="Zhang J."/>
            <person name="Yang G."/>
            <person name="Wu H."/>
            <person name="Qu D."/>
            <person name="Dong J."/>
            <person name="Sun L."/>
            <person name="Xue Y."/>
            <person name="Zhao A."/>
            <person name="Gao Y."/>
            <person name="Zhu J."/>
            <person name="Kan B."/>
            <person name="Ding K."/>
            <person name="Chen S."/>
            <person name="Cheng H."/>
            <person name="Yao Z."/>
            <person name="He B."/>
            <person name="Chen R."/>
            <person name="Ma D."/>
            <person name="Qiang B."/>
            <person name="Wen Y."/>
            <person name="Hou Y."/>
            <person name="Yu J."/>
        </authorList>
    </citation>
    <scope>NUCLEOTIDE SEQUENCE [LARGE SCALE GENOMIC DNA]</scope>
    <source>
        <strain>301 / Serotype 2a</strain>
    </source>
</reference>
<reference key="3">
    <citation type="journal article" date="2003" name="Infect. Immun.">
        <title>Complete genome sequence and comparative genomics of Shigella flexneri serotype 2a strain 2457T.</title>
        <authorList>
            <person name="Wei J."/>
            <person name="Goldberg M.B."/>
            <person name="Burland V."/>
            <person name="Venkatesan M.M."/>
            <person name="Deng W."/>
            <person name="Fournier G."/>
            <person name="Mayhew G.F."/>
            <person name="Plunkett G. III"/>
            <person name="Rose D.J."/>
            <person name="Darling A."/>
            <person name="Mau B."/>
            <person name="Perna N.T."/>
            <person name="Payne S.M."/>
            <person name="Runyen-Janecky L.J."/>
            <person name="Zhou S."/>
            <person name="Schwartz D.C."/>
            <person name="Blattner F.R."/>
        </authorList>
    </citation>
    <scope>NUCLEOTIDE SEQUENCE [LARGE SCALE GENOMIC DNA]</scope>
    <source>
        <strain>ATCC 700930 / 2457T / Serotype 2a</strain>
    </source>
</reference>
<dbReference type="EC" id="2.7.7.9"/>
<dbReference type="EMBL" id="L32811">
    <property type="protein sequence ID" value="AAD15244.1"/>
    <property type="molecule type" value="Genomic_DNA"/>
</dbReference>
<dbReference type="EMBL" id="AE005674">
    <property type="protein sequence ID" value="AAN42849.1"/>
    <property type="molecule type" value="Genomic_DNA"/>
</dbReference>
<dbReference type="EMBL" id="AE014073">
    <property type="protein sequence ID" value="AAP16734.1"/>
    <property type="molecule type" value="Genomic_DNA"/>
</dbReference>
<dbReference type="RefSeq" id="NP_707142.1">
    <property type="nucleotide sequence ID" value="NC_004337.2"/>
</dbReference>
<dbReference type="RefSeq" id="WP_000718995.1">
    <property type="nucleotide sequence ID" value="NZ_WPGW01000029.1"/>
</dbReference>
<dbReference type="SMR" id="P0AEP6"/>
<dbReference type="STRING" id="198214.SF1236"/>
<dbReference type="PaxDb" id="198214-SF1236"/>
<dbReference type="GeneID" id="1024213"/>
<dbReference type="GeneID" id="93775302"/>
<dbReference type="KEGG" id="sfl:SF1236"/>
<dbReference type="KEGG" id="sfx:S1322"/>
<dbReference type="PATRIC" id="fig|198214.7.peg.1454"/>
<dbReference type="HOGENOM" id="CLU_029499_1_1_6"/>
<dbReference type="UniPathway" id="UPA00030"/>
<dbReference type="Proteomes" id="UP000001006">
    <property type="component" value="Chromosome"/>
</dbReference>
<dbReference type="Proteomes" id="UP000002673">
    <property type="component" value="Chromosome"/>
</dbReference>
<dbReference type="GO" id="GO:0003983">
    <property type="term" value="F:UTP:glucose-1-phosphate uridylyltransferase activity"/>
    <property type="evidence" value="ECO:0007669"/>
    <property type="project" value="UniProtKB-EC"/>
</dbReference>
<dbReference type="GO" id="GO:0009103">
    <property type="term" value="P:lipopolysaccharide biosynthetic process"/>
    <property type="evidence" value="ECO:0007669"/>
    <property type="project" value="UniProtKB-UniPathway"/>
</dbReference>
<dbReference type="GO" id="GO:0006011">
    <property type="term" value="P:UDP-alpha-D-glucose metabolic process"/>
    <property type="evidence" value="ECO:0007669"/>
    <property type="project" value="InterPro"/>
</dbReference>
<dbReference type="CDD" id="cd02541">
    <property type="entry name" value="UGPase_prokaryotic"/>
    <property type="match status" value="1"/>
</dbReference>
<dbReference type="FunFam" id="3.90.550.10:FF:000008">
    <property type="entry name" value="UTP--glucose-1-phosphate uridylyltransferase"/>
    <property type="match status" value="1"/>
</dbReference>
<dbReference type="Gene3D" id="3.90.550.10">
    <property type="entry name" value="Spore Coat Polysaccharide Biosynthesis Protein SpsA, Chain A"/>
    <property type="match status" value="1"/>
</dbReference>
<dbReference type="InterPro" id="IPR005771">
    <property type="entry name" value="GalU_uridylyltTrfase_bac/arc"/>
</dbReference>
<dbReference type="InterPro" id="IPR005835">
    <property type="entry name" value="NTP_transferase_dom"/>
</dbReference>
<dbReference type="InterPro" id="IPR029044">
    <property type="entry name" value="Nucleotide-diphossugar_trans"/>
</dbReference>
<dbReference type="NCBIfam" id="TIGR01099">
    <property type="entry name" value="galU"/>
    <property type="match status" value="1"/>
</dbReference>
<dbReference type="NCBIfam" id="NF009928">
    <property type="entry name" value="PRK13389.1"/>
    <property type="match status" value="1"/>
</dbReference>
<dbReference type="PANTHER" id="PTHR43197">
    <property type="entry name" value="UTP--GLUCOSE-1-PHOSPHATE URIDYLYLTRANSFERASE"/>
    <property type="match status" value="1"/>
</dbReference>
<dbReference type="PANTHER" id="PTHR43197:SF1">
    <property type="entry name" value="UTP--GLUCOSE-1-PHOSPHATE URIDYLYLTRANSFERASE"/>
    <property type="match status" value="1"/>
</dbReference>
<dbReference type="Pfam" id="PF00483">
    <property type="entry name" value="NTP_transferase"/>
    <property type="match status" value="1"/>
</dbReference>
<dbReference type="SUPFAM" id="SSF53448">
    <property type="entry name" value="Nucleotide-diphospho-sugar transferases"/>
    <property type="match status" value="1"/>
</dbReference>
<feature type="initiator methionine" description="Removed" evidence="1">
    <location>
        <position position="1"/>
    </location>
</feature>
<feature type="chain" id="PRO_0000201363" description="UTP--glucose-1-phosphate uridylyltransferase">
    <location>
        <begin position="2"/>
        <end position="302"/>
    </location>
</feature>
<organism>
    <name type="scientific">Shigella flexneri</name>
    <dbReference type="NCBI Taxonomy" id="623"/>
    <lineage>
        <taxon>Bacteria</taxon>
        <taxon>Pseudomonadati</taxon>
        <taxon>Pseudomonadota</taxon>
        <taxon>Gammaproteobacteria</taxon>
        <taxon>Enterobacterales</taxon>
        <taxon>Enterobacteriaceae</taxon>
        <taxon>Shigella</taxon>
    </lineage>
</organism>
<gene>
    <name type="primary">galU</name>
    <name type="ordered locus">SF1236</name>
    <name type="ordered locus">S1322</name>
</gene>
<proteinExistence type="evidence at protein level"/>
<sequence>MAAINTKVKKAVIPVAGLGTRMLPATKAIPKEMLPLVDKPLIQYVVNECIAAGITEIVLVTHSSKNSIENHFDTSFELEAMLEKRVKRQLLDEVQSICPPHVTIMQVRQGLAKGLGHAVLCAHPVVGDEPVAVILPDVILDEYESDLSQDNLAEMIRRFDETGHSQIMVEPVADVTAYGVVDCKGVELAPGESVPMVGVVEKPKADVAPSNLAIVGRYVLSADIWPLLAKTPPGAGDEIQLTDAIDMLIEKETVEAYHMKGKSHDCGNKLGYMQAFVEYGIRHNTLGTEFKAWLEEEMGIKK</sequence>
<name>GALU_SHIFL</name>
<evidence type="ECO:0000250" key="1"/>
<evidence type="ECO:0000269" key="2">
    <source>
    </source>
</evidence>
<evidence type="ECO:0000305" key="3"/>
<keyword id="KW-0448">Lipopolysaccharide biosynthesis</keyword>
<keyword id="KW-0460">Magnesium</keyword>
<keyword id="KW-0548">Nucleotidyltransferase</keyword>
<keyword id="KW-1185">Reference proteome</keyword>
<keyword id="KW-0808">Transferase</keyword>
<keyword id="KW-0843">Virulence</keyword>
<protein>
    <recommendedName>
        <fullName>UTP--glucose-1-phosphate uridylyltransferase</fullName>
        <ecNumber>2.7.7.9</ecNumber>
    </recommendedName>
    <alternativeName>
        <fullName>Alpha-D-glucosyl-1-phosphate uridylyltransferase</fullName>
    </alternativeName>
    <alternativeName>
        <fullName>UDP-glucose pyrophosphorylase</fullName>
        <shortName>UDPGP</shortName>
    </alternativeName>
    <alternativeName>
        <fullName>Uridine diphosphoglucose pyrophosphorylase</fullName>
    </alternativeName>
</protein>
<accession>P0AEP6</accession>
<accession>P25520</accession>
<comment type="function">
    <text evidence="1">May play a role in stationary phase survival.</text>
</comment>
<comment type="catalytic activity">
    <reaction>
        <text>alpha-D-glucose 1-phosphate + UTP + H(+) = UDP-alpha-D-glucose + diphosphate</text>
        <dbReference type="Rhea" id="RHEA:19889"/>
        <dbReference type="ChEBI" id="CHEBI:15378"/>
        <dbReference type="ChEBI" id="CHEBI:33019"/>
        <dbReference type="ChEBI" id="CHEBI:46398"/>
        <dbReference type="ChEBI" id="CHEBI:58601"/>
        <dbReference type="ChEBI" id="CHEBI:58885"/>
        <dbReference type="EC" id="2.7.7.9"/>
    </reaction>
</comment>
<comment type="cofactor">
    <cofactor evidence="1">
        <name>Mg(2+)</name>
        <dbReference type="ChEBI" id="CHEBI:18420"/>
    </cofactor>
</comment>
<comment type="pathway">
    <text>Bacterial outer membrane biogenesis; lipopolysaccharide biosynthesis.</text>
</comment>
<comment type="subunit">
    <text evidence="1">Homotetramer or homopentamer.</text>
</comment>
<comment type="disruption phenotype">
    <text evidence="2">A transposon mutant in galU (only the first 220 residues could be expressed) allows HeLa cell invasion but no cell spreading. Shows decreased secretion of IscA, a protein required for cell spreading. The lipopolysaccharide produced is of a size consistent with it containing only lipid A and a single core component.</text>
</comment>
<comment type="similarity">
    <text evidence="3">Belongs to the UDPGP type 2 family.</text>
</comment>